<feature type="chain" id="PRO_1000141245" description="Small ribosomal subunit protein uS13">
    <location>
        <begin position="1"/>
        <end position="123"/>
    </location>
</feature>
<feature type="region of interest" description="Disordered" evidence="2">
    <location>
        <begin position="93"/>
        <end position="123"/>
    </location>
</feature>
<comment type="function">
    <text evidence="1">Located at the top of the head of the 30S subunit, it contacts several helices of the 16S rRNA. In the 70S ribosome it contacts the 23S rRNA (bridge B1a) and protein L5 of the 50S subunit (bridge B1b), connecting the 2 subunits; these bridges are implicated in subunit movement. Contacts the tRNAs in the A and P-sites.</text>
</comment>
<comment type="subunit">
    <text evidence="1">Part of the 30S ribosomal subunit. Forms a loose heterodimer with protein S19. Forms two bridges to the 50S subunit in the 70S ribosome.</text>
</comment>
<comment type="similarity">
    <text evidence="1">Belongs to the universal ribosomal protein uS13 family.</text>
</comment>
<organism>
    <name type="scientific">Clostridium botulinum (strain Loch Maree / Type A3)</name>
    <dbReference type="NCBI Taxonomy" id="498214"/>
    <lineage>
        <taxon>Bacteria</taxon>
        <taxon>Bacillati</taxon>
        <taxon>Bacillota</taxon>
        <taxon>Clostridia</taxon>
        <taxon>Eubacteriales</taxon>
        <taxon>Clostridiaceae</taxon>
        <taxon>Clostridium</taxon>
    </lineage>
</organism>
<name>RS13_CLOBM</name>
<gene>
    <name evidence="1" type="primary">rpsM</name>
    <name type="ordered locus">CLK_2898</name>
</gene>
<sequence length="123" mass="13976">MARISGIDLPKEKRVEIGLTYIYGIGLPTSQEILEATGVNPDTRVKDLSEEEVNAIRDYVNKNVKVEGDLRREIKLNIKRLVEIGSYRGIRHRRNLPVRGQKTKTNARTRKGPKRAIGGKKKK</sequence>
<keyword id="KW-0687">Ribonucleoprotein</keyword>
<keyword id="KW-0689">Ribosomal protein</keyword>
<keyword id="KW-0694">RNA-binding</keyword>
<keyword id="KW-0699">rRNA-binding</keyword>
<keyword id="KW-0820">tRNA-binding</keyword>
<protein>
    <recommendedName>
        <fullName evidence="1">Small ribosomal subunit protein uS13</fullName>
    </recommendedName>
    <alternativeName>
        <fullName evidence="3">30S ribosomal protein S13</fullName>
    </alternativeName>
</protein>
<dbReference type="EMBL" id="CP000962">
    <property type="protein sequence ID" value="ACA56316.1"/>
    <property type="molecule type" value="Genomic_DNA"/>
</dbReference>
<dbReference type="RefSeq" id="WP_012344203.1">
    <property type="nucleotide sequence ID" value="NC_010520.1"/>
</dbReference>
<dbReference type="SMR" id="B1KSJ9"/>
<dbReference type="KEGG" id="cbl:CLK_2898"/>
<dbReference type="HOGENOM" id="CLU_103849_1_2_9"/>
<dbReference type="GO" id="GO:0005829">
    <property type="term" value="C:cytosol"/>
    <property type="evidence" value="ECO:0007669"/>
    <property type="project" value="TreeGrafter"/>
</dbReference>
<dbReference type="GO" id="GO:0015935">
    <property type="term" value="C:small ribosomal subunit"/>
    <property type="evidence" value="ECO:0007669"/>
    <property type="project" value="TreeGrafter"/>
</dbReference>
<dbReference type="GO" id="GO:0019843">
    <property type="term" value="F:rRNA binding"/>
    <property type="evidence" value="ECO:0007669"/>
    <property type="project" value="UniProtKB-UniRule"/>
</dbReference>
<dbReference type="GO" id="GO:0003735">
    <property type="term" value="F:structural constituent of ribosome"/>
    <property type="evidence" value="ECO:0007669"/>
    <property type="project" value="InterPro"/>
</dbReference>
<dbReference type="GO" id="GO:0000049">
    <property type="term" value="F:tRNA binding"/>
    <property type="evidence" value="ECO:0007669"/>
    <property type="project" value="UniProtKB-UniRule"/>
</dbReference>
<dbReference type="GO" id="GO:0006412">
    <property type="term" value="P:translation"/>
    <property type="evidence" value="ECO:0007669"/>
    <property type="project" value="UniProtKB-UniRule"/>
</dbReference>
<dbReference type="FunFam" id="1.10.8.50:FF:000001">
    <property type="entry name" value="30S ribosomal protein S13"/>
    <property type="match status" value="1"/>
</dbReference>
<dbReference type="FunFam" id="4.10.910.10:FF:000001">
    <property type="entry name" value="30S ribosomal protein S13"/>
    <property type="match status" value="1"/>
</dbReference>
<dbReference type="Gene3D" id="1.10.8.50">
    <property type="match status" value="1"/>
</dbReference>
<dbReference type="Gene3D" id="4.10.910.10">
    <property type="entry name" value="30s ribosomal protein s13, domain 2"/>
    <property type="match status" value="1"/>
</dbReference>
<dbReference type="HAMAP" id="MF_01315">
    <property type="entry name" value="Ribosomal_uS13"/>
    <property type="match status" value="1"/>
</dbReference>
<dbReference type="InterPro" id="IPR027437">
    <property type="entry name" value="Rbsml_uS13_C"/>
</dbReference>
<dbReference type="InterPro" id="IPR001892">
    <property type="entry name" value="Ribosomal_uS13"/>
</dbReference>
<dbReference type="InterPro" id="IPR010979">
    <property type="entry name" value="Ribosomal_uS13-like_H2TH"/>
</dbReference>
<dbReference type="InterPro" id="IPR019980">
    <property type="entry name" value="Ribosomal_uS13_bac-type"/>
</dbReference>
<dbReference type="InterPro" id="IPR018269">
    <property type="entry name" value="Ribosomal_uS13_CS"/>
</dbReference>
<dbReference type="NCBIfam" id="TIGR03631">
    <property type="entry name" value="uS13_bact"/>
    <property type="match status" value="1"/>
</dbReference>
<dbReference type="PANTHER" id="PTHR10871">
    <property type="entry name" value="30S RIBOSOMAL PROTEIN S13/40S RIBOSOMAL PROTEIN S18"/>
    <property type="match status" value="1"/>
</dbReference>
<dbReference type="PANTHER" id="PTHR10871:SF1">
    <property type="entry name" value="SMALL RIBOSOMAL SUBUNIT PROTEIN US13M"/>
    <property type="match status" value="1"/>
</dbReference>
<dbReference type="Pfam" id="PF00416">
    <property type="entry name" value="Ribosomal_S13"/>
    <property type="match status" value="1"/>
</dbReference>
<dbReference type="PIRSF" id="PIRSF002134">
    <property type="entry name" value="Ribosomal_S13"/>
    <property type="match status" value="1"/>
</dbReference>
<dbReference type="SUPFAM" id="SSF46946">
    <property type="entry name" value="S13-like H2TH domain"/>
    <property type="match status" value="1"/>
</dbReference>
<dbReference type="PROSITE" id="PS00646">
    <property type="entry name" value="RIBOSOMAL_S13_1"/>
    <property type="match status" value="1"/>
</dbReference>
<dbReference type="PROSITE" id="PS50159">
    <property type="entry name" value="RIBOSOMAL_S13_2"/>
    <property type="match status" value="1"/>
</dbReference>
<evidence type="ECO:0000255" key="1">
    <source>
        <dbReference type="HAMAP-Rule" id="MF_01315"/>
    </source>
</evidence>
<evidence type="ECO:0000256" key="2">
    <source>
        <dbReference type="SAM" id="MobiDB-lite"/>
    </source>
</evidence>
<evidence type="ECO:0000305" key="3"/>
<accession>B1KSJ9</accession>
<proteinExistence type="inferred from homology"/>
<reference key="1">
    <citation type="journal article" date="2007" name="PLoS ONE">
        <title>Analysis of the neurotoxin complex genes in Clostridium botulinum A1-A4 and B1 strains: BoNT/A3, /Ba4 and /B1 clusters are located within plasmids.</title>
        <authorList>
            <person name="Smith T.J."/>
            <person name="Hill K.K."/>
            <person name="Foley B.T."/>
            <person name="Detter J.C."/>
            <person name="Munk A.C."/>
            <person name="Bruce D.C."/>
            <person name="Doggett N.A."/>
            <person name="Smith L.A."/>
            <person name="Marks J.D."/>
            <person name="Xie G."/>
            <person name="Brettin T.S."/>
        </authorList>
    </citation>
    <scope>NUCLEOTIDE SEQUENCE [LARGE SCALE GENOMIC DNA]</scope>
    <source>
        <strain>Loch Maree / Type A3</strain>
    </source>
</reference>